<sequence>MRQSGTSQPLLINMYLPDPVGDGLFKEGKSPSWGPLSPAVQKGSGQIQLWQFLLELLADRANAGCIAWEGGHGEFKLTDPDEVARRWGERKSKPNMNYDKLSRALRYYYDKNIMSKVHGKRYAYRFDFQGLAQACQPPPAHAHAAAAAAAAAAAAQDGALYKLPAGLAPLPFPGLSKLNLMAASAGVAPAGFSYWPGPNATAAAAATAALYPTPGLQPPPGPFGAVAAASHLGGHYH</sequence>
<reference key="1">
    <citation type="journal article" date="2002" name="Dev. Genes Evol.">
        <title>mPet-1, a mouse ETS-domain transcription factor, is expressed in central serotonergic neurons.</title>
        <authorList>
            <person name="Pfaar H."/>
            <person name="von Holst A."/>
            <person name="Vogt Weisenhorn D.M."/>
            <person name="Brodski C."/>
            <person name="Guimera J."/>
            <person name="Wurst W."/>
        </authorList>
    </citation>
    <scope>NUCLEOTIDE SEQUENCE [GENOMIC DNA / MRNA]</scope>
    <scope>SUBCELLULAR LOCATION</scope>
    <scope>TISSUE SPECIFICITY</scope>
    <scope>DEVELOPMENTAL STAGE</scope>
    <source>
        <strain>129/SvJ</strain>
        <strain>C3H/HeJ</strain>
        <tissue>Fetal brain</tissue>
    </source>
</reference>
<reference key="2">
    <citation type="submission" date="2005-08" db="EMBL/GenBank/DDBJ databases">
        <authorList>
            <person name="Mural R.J."/>
            <person name="Adams M.D."/>
            <person name="Myers E.W."/>
            <person name="Smith H.O."/>
            <person name="Venter J.C."/>
        </authorList>
    </citation>
    <scope>NUCLEOTIDE SEQUENCE [LARGE SCALE GENOMIC DNA]</scope>
</reference>
<reference key="3">
    <citation type="journal article" date="2004" name="Genome Res.">
        <title>The status, quality, and expansion of the NIH full-length cDNA project: the Mammalian Gene Collection (MGC).</title>
        <authorList>
            <consortium name="The MGC Project Team"/>
        </authorList>
    </citation>
    <scope>NUCLEOTIDE SEQUENCE [LARGE SCALE MRNA]</scope>
</reference>
<reference key="4">
    <citation type="journal article" date="2003" name="J. Neurosci.">
        <title>Lmx1b, Pet-1, and Nkx2.2 coordinately specify serotonergic neurotransmitter phenotype.</title>
        <authorList>
            <person name="Cheng L."/>
            <person name="Chen C.-L."/>
            <person name="Luo P."/>
            <person name="Tan M."/>
            <person name="Qiu M."/>
            <person name="Johnson R."/>
            <person name="Ma Q."/>
        </authorList>
    </citation>
    <scope>FUNCTION</scope>
    <scope>DEVELOPMENTAL STAGE</scope>
</reference>
<reference key="5">
    <citation type="journal article" date="2003" name="Neuron">
        <title>Pet-1 ETS gene plays a critical role in 5-HT neuron development and is required for normal anxiety-like and aggressive behavior.</title>
        <authorList>
            <person name="Hendricks T.J."/>
            <person name="Fyodorov D.V."/>
            <person name="Wegman L.J."/>
            <person name="Lelutiu N.B."/>
            <person name="Pehek E.A."/>
            <person name="Yamamoto B."/>
            <person name="Silver J."/>
            <person name="Weeber E.J."/>
            <person name="Sweatt J.D."/>
            <person name="Deneris E.S."/>
        </authorList>
    </citation>
    <scope>FUNCTION</scope>
    <scope>DISRUPTION PHENOTYPE</scope>
</reference>
<reference key="6">
    <citation type="journal article" date="2007" name="Respir. Physiol. Neurobiol.">
        <title>Arrest of 5HT neuron differentiation delays respiratory maturation and impairs neonatal homeostatic responses to environmental challenges.</title>
        <authorList>
            <person name="Erickson J.T."/>
            <person name="Shafer G."/>
            <person name="Rossetti M.D."/>
            <person name="Wilson C.G."/>
            <person name="Deneris E.S."/>
        </authorList>
    </citation>
    <scope>FUNCTION</scope>
    <scope>DISRUPTION PHENOTYPE</scope>
</reference>
<comment type="function">
    <text evidence="4 5 6">Functions as a transcriptional regulator. May function as a transcriptional repressor. Functions in the differentiation and the maintenance of the central serotonergic neurons. May play a role in cell growth.</text>
</comment>
<comment type="subcellular location">
    <subcellularLocation>
        <location evidence="2 3">Nucleus</location>
    </subcellularLocation>
</comment>
<comment type="tissue specificity">
    <text evidence="3">Expressed in central serotonergic neurons.</text>
</comment>
<comment type="developmental stage">
    <text evidence="3 5">First expressed at 11 dpc in the rostral cluster of serotonergic neurons. During development, expression is restricted to serotonergic neurons located in the raphe nuclei.</text>
</comment>
<comment type="disruption phenotype">
    <text evidence="4 6">Mice display heightened aggressive and anxiety-like behaviors. They also display an extended and exacerbated period of breathing instability immediately after birth which results in an increased risk of death. This is associated with loss of the differentiation of a large number of the serotonin (5-HT) neurons without major structural abnormalities of the brain.</text>
</comment>
<comment type="similarity">
    <text evidence="7">Belongs to the ETS family.</text>
</comment>
<feature type="chain" id="PRO_0000344205" description="Protein FEV">
    <location>
        <begin position="1"/>
        <end position="237"/>
    </location>
</feature>
<feature type="DNA-binding region" description="ETS" evidence="2">
    <location>
        <begin position="47"/>
        <end position="127"/>
    </location>
</feature>
<feature type="region of interest" description="May mediate active transcriptional repression" evidence="1">
    <location>
        <begin position="129"/>
        <end position="237"/>
    </location>
</feature>
<gene>
    <name type="primary">Fev</name>
    <name type="synonym">Pet1</name>
</gene>
<protein>
    <recommendedName>
        <fullName>Protein FEV</fullName>
    </recommendedName>
    <alternativeName>
        <fullName>PC12 ETS domain-containing transcription factor 1</fullName>
        <shortName>PC12 ETS factor 1</shortName>
        <shortName>Pet-1</shortName>
        <shortName>mPet-1</shortName>
    </alternativeName>
</protein>
<accession>Q8QZW2</accession>
<dbReference type="EMBL" id="AY049085">
    <property type="protein sequence ID" value="AAL13055.1"/>
    <property type="molecule type" value="mRNA"/>
</dbReference>
<dbReference type="EMBL" id="AY049086">
    <property type="protein sequence ID" value="AAL13056.1"/>
    <property type="molecule type" value="Genomic_DNA"/>
</dbReference>
<dbReference type="EMBL" id="CH466548">
    <property type="protein sequence ID" value="EDL00354.1"/>
    <property type="molecule type" value="Genomic_DNA"/>
</dbReference>
<dbReference type="EMBL" id="BC138435">
    <property type="protein sequence ID" value="AAI38436.1"/>
    <property type="molecule type" value="mRNA"/>
</dbReference>
<dbReference type="EMBL" id="BC138436">
    <property type="protein sequence ID" value="AAI38437.1"/>
    <property type="molecule type" value="mRNA"/>
</dbReference>
<dbReference type="CCDS" id="CCDS15058.1"/>
<dbReference type="RefSeq" id="NP_694751.1">
    <property type="nucleotide sequence ID" value="NM_153111.2"/>
</dbReference>
<dbReference type="SMR" id="Q8QZW2"/>
<dbReference type="FunCoup" id="Q8QZW2">
    <property type="interactions" value="250"/>
</dbReference>
<dbReference type="STRING" id="10090.ENSMUSP00000070878"/>
<dbReference type="GlyGen" id="Q8QZW2">
    <property type="glycosylation" value="1 site"/>
</dbReference>
<dbReference type="PhosphoSitePlus" id="Q8QZW2"/>
<dbReference type="PaxDb" id="10090-ENSMUSP00000070878"/>
<dbReference type="ProteomicsDB" id="271744"/>
<dbReference type="Antibodypedia" id="34294">
    <property type="antibodies" value="113 antibodies from 26 providers"/>
</dbReference>
<dbReference type="DNASU" id="260298"/>
<dbReference type="Ensembl" id="ENSMUST00000068631.4">
    <property type="protein sequence ID" value="ENSMUSP00000070878.4"/>
    <property type="gene ID" value="ENSMUSG00000055197.5"/>
</dbReference>
<dbReference type="GeneID" id="260298"/>
<dbReference type="KEGG" id="mmu:260298"/>
<dbReference type="UCSC" id="uc007bnh.2">
    <property type="organism name" value="mouse"/>
</dbReference>
<dbReference type="AGR" id="MGI:2449712"/>
<dbReference type="CTD" id="54738"/>
<dbReference type="MGI" id="MGI:2449712">
    <property type="gene designation" value="Fev"/>
</dbReference>
<dbReference type="VEuPathDB" id="HostDB:ENSMUSG00000055197"/>
<dbReference type="eggNOG" id="KOG3806">
    <property type="taxonomic scope" value="Eukaryota"/>
</dbReference>
<dbReference type="GeneTree" id="ENSGT00940000161562"/>
<dbReference type="HOGENOM" id="CLU_045216_4_0_1"/>
<dbReference type="InParanoid" id="Q8QZW2"/>
<dbReference type="OMA" id="GFSYWAG"/>
<dbReference type="OrthoDB" id="10067219at2759"/>
<dbReference type="PhylomeDB" id="Q8QZW2"/>
<dbReference type="TreeFam" id="TF316214"/>
<dbReference type="BioGRID-ORCS" id="260298">
    <property type="hits" value="3 hits in 77 CRISPR screens"/>
</dbReference>
<dbReference type="PRO" id="PR:Q8QZW2"/>
<dbReference type="Proteomes" id="UP000000589">
    <property type="component" value="Chromosome 1"/>
</dbReference>
<dbReference type="RNAct" id="Q8QZW2">
    <property type="molecule type" value="protein"/>
</dbReference>
<dbReference type="Bgee" id="ENSMUSG00000055197">
    <property type="expression patterns" value="Expressed in mesodermal cell in embryo and 44 other cell types or tissues"/>
</dbReference>
<dbReference type="ExpressionAtlas" id="Q8QZW2">
    <property type="expression patterns" value="baseline and differential"/>
</dbReference>
<dbReference type="GO" id="GO:0043025">
    <property type="term" value="C:neuronal cell body"/>
    <property type="evidence" value="ECO:0000304"/>
    <property type="project" value="ParkinsonsUK-UCL"/>
</dbReference>
<dbReference type="GO" id="GO:0016607">
    <property type="term" value="C:nuclear speck"/>
    <property type="evidence" value="ECO:0007669"/>
    <property type="project" value="Ensembl"/>
</dbReference>
<dbReference type="GO" id="GO:0005634">
    <property type="term" value="C:nucleus"/>
    <property type="evidence" value="ECO:0000314"/>
    <property type="project" value="MGI"/>
</dbReference>
<dbReference type="GO" id="GO:0001228">
    <property type="term" value="F:DNA-binding transcription activator activity, RNA polymerase II-specific"/>
    <property type="evidence" value="ECO:0007669"/>
    <property type="project" value="Ensembl"/>
</dbReference>
<dbReference type="GO" id="GO:0000981">
    <property type="term" value="F:DNA-binding transcription factor activity, RNA polymerase II-specific"/>
    <property type="evidence" value="ECO:0000303"/>
    <property type="project" value="ParkinsonsUK-UCL"/>
</dbReference>
<dbReference type="GO" id="GO:0000978">
    <property type="term" value="F:RNA polymerase II cis-regulatory region sequence-specific DNA binding"/>
    <property type="evidence" value="ECO:0007669"/>
    <property type="project" value="Ensembl"/>
</dbReference>
<dbReference type="GO" id="GO:0042711">
    <property type="term" value="P:maternal behavior"/>
    <property type="evidence" value="ECO:0000315"/>
    <property type="project" value="MGI"/>
</dbReference>
<dbReference type="GO" id="GO:0048665">
    <property type="term" value="P:neuron fate specification"/>
    <property type="evidence" value="ECO:0000315"/>
    <property type="project" value="MGI"/>
</dbReference>
<dbReference type="GO" id="GO:0042551">
    <property type="term" value="P:neuron maturation"/>
    <property type="evidence" value="ECO:0000315"/>
    <property type="project" value="MGI"/>
</dbReference>
<dbReference type="GO" id="GO:0010628">
    <property type="term" value="P:positive regulation of gene expression"/>
    <property type="evidence" value="ECO:0000315"/>
    <property type="project" value="MGI"/>
</dbReference>
<dbReference type="GO" id="GO:1905627">
    <property type="term" value="P:regulation of serotonin biosynthetic process"/>
    <property type="evidence" value="ECO:0000303"/>
    <property type="project" value="ParkinsonsUK-UCL"/>
</dbReference>
<dbReference type="GO" id="GO:0051611">
    <property type="term" value="P:regulation of serotonin uptake"/>
    <property type="evidence" value="ECO:0000303"/>
    <property type="project" value="ParkinsonsUK-UCL"/>
</dbReference>
<dbReference type="GO" id="GO:0006357">
    <property type="term" value="P:regulation of transcription by RNA polymerase II"/>
    <property type="evidence" value="ECO:0000303"/>
    <property type="project" value="ParkinsonsUK-UCL"/>
</dbReference>
<dbReference type="FunFam" id="1.10.10.10:FF:000392">
    <property type="entry name" value="FEV, ETS transcription factor"/>
    <property type="match status" value="1"/>
</dbReference>
<dbReference type="Gene3D" id="1.10.10.10">
    <property type="entry name" value="Winged helix-like DNA-binding domain superfamily/Winged helix DNA-binding domain"/>
    <property type="match status" value="1"/>
</dbReference>
<dbReference type="InterPro" id="IPR000418">
    <property type="entry name" value="Ets_dom"/>
</dbReference>
<dbReference type="InterPro" id="IPR046328">
    <property type="entry name" value="ETS_fam"/>
</dbReference>
<dbReference type="InterPro" id="IPR036388">
    <property type="entry name" value="WH-like_DNA-bd_sf"/>
</dbReference>
<dbReference type="InterPro" id="IPR036390">
    <property type="entry name" value="WH_DNA-bd_sf"/>
</dbReference>
<dbReference type="PANTHER" id="PTHR11849">
    <property type="entry name" value="ETS"/>
    <property type="match status" value="1"/>
</dbReference>
<dbReference type="PANTHER" id="PTHR11849:SF203">
    <property type="entry name" value="PROTEIN FEV"/>
    <property type="match status" value="1"/>
</dbReference>
<dbReference type="Pfam" id="PF00178">
    <property type="entry name" value="Ets"/>
    <property type="match status" value="1"/>
</dbReference>
<dbReference type="PRINTS" id="PR00454">
    <property type="entry name" value="ETSDOMAIN"/>
</dbReference>
<dbReference type="SMART" id="SM00413">
    <property type="entry name" value="ETS"/>
    <property type="match status" value="1"/>
</dbReference>
<dbReference type="SUPFAM" id="SSF46785">
    <property type="entry name" value="Winged helix' DNA-binding domain"/>
    <property type="match status" value="1"/>
</dbReference>
<dbReference type="PROSITE" id="PS00345">
    <property type="entry name" value="ETS_DOMAIN_1"/>
    <property type="match status" value="1"/>
</dbReference>
<dbReference type="PROSITE" id="PS00346">
    <property type="entry name" value="ETS_DOMAIN_2"/>
    <property type="match status" value="1"/>
</dbReference>
<dbReference type="PROSITE" id="PS50061">
    <property type="entry name" value="ETS_DOMAIN_3"/>
    <property type="match status" value="1"/>
</dbReference>
<keyword id="KW-0217">Developmental protein</keyword>
<keyword id="KW-0221">Differentiation</keyword>
<keyword id="KW-0238">DNA-binding</keyword>
<keyword id="KW-0524">Neurogenesis</keyword>
<keyword id="KW-0539">Nucleus</keyword>
<keyword id="KW-1185">Reference proteome</keyword>
<keyword id="KW-0804">Transcription</keyword>
<keyword id="KW-0805">Transcription regulation</keyword>
<evidence type="ECO:0000250" key="1"/>
<evidence type="ECO:0000255" key="2">
    <source>
        <dbReference type="PROSITE-ProRule" id="PRU00237"/>
    </source>
</evidence>
<evidence type="ECO:0000269" key="3">
    <source>
    </source>
</evidence>
<evidence type="ECO:0000269" key="4">
    <source>
    </source>
</evidence>
<evidence type="ECO:0000269" key="5">
    <source>
    </source>
</evidence>
<evidence type="ECO:0000269" key="6">
    <source>
    </source>
</evidence>
<evidence type="ECO:0000305" key="7"/>
<proteinExistence type="evidence at transcript level"/>
<organism>
    <name type="scientific">Mus musculus</name>
    <name type="common">Mouse</name>
    <dbReference type="NCBI Taxonomy" id="10090"/>
    <lineage>
        <taxon>Eukaryota</taxon>
        <taxon>Metazoa</taxon>
        <taxon>Chordata</taxon>
        <taxon>Craniata</taxon>
        <taxon>Vertebrata</taxon>
        <taxon>Euteleostomi</taxon>
        <taxon>Mammalia</taxon>
        <taxon>Eutheria</taxon>
        <taxon>Euarchontoglires</taxon>
        <taxon>Glires</taxon>
        <taxon>Rodentia</taxon>
        <taxon>Myomorpha</taxon>
        <taxon>Muroidea</taxon>
        <taxon>Muridae</taxon>
        <taxon>Murinae</taxon>
        <taxon>Mus</taxon>
        <taxon>Mus</taxon>
    </lineage>
</organism>
<name>FEV_MOUSE</name>